<keyword id="KW-0269">Exonuclease</keyword>
<keyword id="KW-0378">Hydrolase</keyword>
<keyword id="KW-0479">Metal-binding</keyword>
<keyword id="KW-0540">Nuclease</keyword>
<keyword id="KW-0539">Nucleus</keyword>
<keyword id="KW-1267">Proteomics identification</keyword>
<keyword id="KW-1185">Reference proteome</keyword>
<accession>Q93075</accession>
<accession>Q3MIL9</accession>
<accession>Q5BKU0</accession>
<feature type="chain" id="PRO_0000201993" description="3'-5' RNA nuclease TATDN2">
    <location>
        <begin position="1"/>
        <end position="761"/>
    </location>
</feature>
<feature type="region of interest" description="Disordered" evidence="2">
    <location>
        <begin position="1"/>
        <end position="90"/>
    </location>
</feature>
<feature type="region of interest" description="Disordered" evidence="2">
    <location>
        <begin position="135"/>
        <end position="181"/>
    </location>
</feature>
<feature type="region of interest" description="Disordered" evidence="2">
    <location>
        <begin position="197"/>
        <end position="294"/>
    </location>
</feature>
<feature type="region of interest" description="Disordered" evidence="2">
    <location>
        <begin position="318"/>
        <end position="337"/>
    </location>
</feature>
<feature type="region of interest" description="Disordered" evidence="2">
    <location>
        <begin position="343"/>
        <end position="364"/>
    </location>
</feature>
<feature type="region of interest" description="Disordered" evidence="2">
    <location>
        <begin position="388"/>
        <end position="486"/>
    </location>
</feature>
<feature type="compositionally biased region" description="Low complexity" evidence="2">
    <location>
        <begin position="33"/>
        <end position="52"/>
    </location>
</feature>
<feature type="compositionally biased region" description="Low complexity" evidence="2">
    <location>
        <begin position="66"/>
        <end position="85"/>
    </location>
</feature>
<feature type="compositionally biased region" description="Basic and acidic residues" evidence="2">
    <location>
        <begin position="247"/>
        <end position="294"/>
    </location>
</feature>
<feature type="compositionally biased region" description="Low complexity" evidence="2">
    <location>
        <begin position="388"/>
        <end position="402"/>
    </location>
</feature>
<feature type="compositionally biased region" description="Polar residues" evidence="2">
    <location>
        <begin position="417"/>
        <end position="431"/>
    </location>
</feature>
<feature type="compositionally biased region" description="Basic and acidic residues" evidence="2">
    <location>
        <begin position="452"/>
        <end position="470"/>
    </location>
</feature>
<feature type="binding site" evidence="1">
    <location>
        <position position="499"/>
    </location>
    <ligand>
        <name>a divalent metal cation</name>
        <dbReference type="ChEBI" id="CHEBI:60240"/>
        <label>1</label>
    </ligand>
</feature>
<feature type="binding site" evidence="1">
    <location>
        <position position="501"/>
    </location>
    <ligand>
        <name>a divalent metal cation</name>
        <dbReference type="ChEBI" id="CHEBI:60240"/>
        <label>1</label>
    </ligand>
</feature>
<feature type="binding site" evidence="1">
    <location>
        <position position="593"/>
    </location>
    <ligand>
        <name>a divalent metal cation</name>
        <dbReference type="ChEBI" id="CHEBI:60240"/>
        <label>1</label>
    </ligand>
</feature>
<feature type="binding site" evidence="1">
    <location>
        <position position="593"/>
    </location>
    <ligand>
        <name>a divalent metal cation</name>
        <dbReference type="ChEBI" id="CHEBI:60240"/>
        <label>2</label>
    </ligand>
</feature>
<feature type="binding site" evidence="1">
    <location>
        <position position="630"/>
    </location>
    <ligand>
        <name>a divalent metal cation</name>
        <dbReference type="ChEBI" id="CHEBI:60240"/>
        <label>2</label>
    </ligand>
</feature>
<feature type="binding site" evidence="1">
    <location>
        <position position="655"/>
    </location>
    <ligand>
        <name>a divalent metal cation</name>
        <dbReference type="ChEBI" id="CHEBI:60240"/>
        <label>2</label>
    </ligand>
</feature>
<feature type="binding site" evidence="1">
    <location>
        <position position="707"/>
    </location>
    <ligand>
        <name>a divalent metal cation</name>
        <dbReference type="ChEBI" id="CHEBI:60240"/>
        <label>1</label>
    </ligand>
</feature>
<feature type="sequence variant" id="VAR_047028" description="In dbSNP:rs2241314.">
    <original>H</original>
    <variation>R</variation>
    <location>
        <position position="217"/>
    </location>
</feature>
<feature type="sequence variant" id="VAR_047029" description="In dbSNP:rs394558." evidence="3">
    <original>V</original>
    <variation>I</variation>
    <location>
        <position position="256"/>
    </location>
</feature>
<feature type="sequence variant" id="VAR_047030" description="In dbSNP:rs2075352." evidence="5">
    <original>P</original>
    <variation>L</variation>
    <location>
        <position position="358"/>
    </location>
</feature>
<feature type="mutagenesis site" description="Completely abrogates R-loop RNA exonuclease activity. Decreases binding to R-loop." evidence="4">
    <original>E</original>
    <variation>A</variation>
    <location>
        <position position="593"/>
    </location>
</feature>
<feature type="mutagenesis site" description="Completely abrogates R-loop RNA exonuclease activity." evidence="4">
    <original>E</original>
    <variation>A</variation>
    <location>
        <position position="705"/>
    </location>
</feature>
<feature type="mutagenesis site" description="Decreases R-loop RNA exonuclease activity." evidence="4">
    <original>D</original>
    <variation>E</variation>
    <location>
        <position position="707"/>
    </location>
</feature>
<comment type="function">
    <text evidence="4">Mg(2+)-dependent 3'RNA exonuclease and endonuclease that resolves R-loops via specific degradation of R-loop RNA stucture (PubMed:37953292). Shows no activity against D-loop and minimal activity against the RNA strand of an RNA-DNA hybrid duplex oligomer. Has no 3' or 5' exonuclease activity, no uracil glycosylase activity, and no 5' flap endonuclease activity on DNA substrates (PubMed:37953292). May have a role in maintaining genomic stability through its role in R-loop resolution (PubMed:37953292).</text>
</comment>
<comment type="cofactor">
    <cofactor evidence="4">
        <name>Mg(2+)</name>
        <dbReference type="ChEBI" id="CHEBI:18420"/>
    </cofactor>
    <text evidence="4">No activity in the presence of Ca(2+). Mild activity in the presence of Mn(2+).</text>
</comment>
<comment type="subcellular location">
    <subcellularLocation>
        <location evidence="6">Nucleus</location>
    </subcellularLocation>
</comment>
<comment type="similarity">
    <text evidence="6">Belongs to the metallo-dependent hydrolases superfamily. TatD-type hydrolase family.</text>
</comment>
<comment type="sequence caution" evidence="6">
    <conflict type="erroneous initiation">
        <sequence resource="EMBL-CDS" id="BAA13208"/>
    </conflict>
</comment>
<name>TATD2_HUMAN</name>
<evidence type="ECO:0000250" key="1">
    <source>
        <dbReference type="UniProtKB" id="Q17R31"/>
    </source>
</evidence>
<evidence type="ECO:0000256" key="2">
    <source>
        <dbReference type="SAM" id="MobiDB-lite"/>
    </source>
</evidence>
<evidence type="ECO:0000269" key="3">
    <source>
    </source>
</evidence>
<evidence type="ECO:0000269" key="4">
    <source>
    </source>
</evidence>
<evidence type="ECO:0000269" key="5">
    <source>
    </source>
</evidence>
<evidence type="ECO:0000305" key="6"/>
<evidence type="ECO:0000312" key="7">
    <source>
        <dbReference type="HGNC" id="HGNC:28988"/>
    </source>
</evidence>
<gene>
    <name type="primary">TATDN2</name>
    <name type="synonym">KIAA0218</name>
</gene>
<organism>
    <name type="scientific">Homo sapiens</name>
    <name type="common">Human</name>
    <dbReference type="NCBI Taxonomy" id="9606"/>
    <lineage>
        <taxon>Eukaryota</taxon>
        <taxon>Metazoa</taxon>
        <taxon>Chordata</taxon>
        <taxon>Craniata</taxon>
        <taxon>Vertebrata</taxon>
        <taxon>Euteleostomi</taxon>
        <taxon>Mammalia</taxon>
        <taxon>Eutheria</taxon>
        <taxon>Euarchontoglires</taxon>
        <taxon>Primates</taxon>
        <taxon>Haplorrhini</taxon>
        <taxon>Catarrhini</taxon>
        <taxon>Hominidae</taxon>
        <taxon>Homo</taxon>
    </lineage>
</organism>
<dbReference type="EC" id="3.1.13.-" evidence="4"/>
<dbReference type="EMBL" id="D86972">
    <property type="protein sequence ID" value="BAA13208.2"/>
    <property type="status" value="ALT_INIT"/>
    <property type="molecule type" value="mRNA"/>
</dbReference>
<dbReference type="EMBL" id="CH471055">
    <property type="protein sequence ID" value="EAW64070.1"/>
    <property type="molecule type" value="Genomic_DNA"/>
</dbReference>
<dbReference type="EMBL" id="BC090935">
    <property type="protein sequence ID" value="AAH90935.1"/>
    <property type="molecule type" value="mRNA"/>
</dbReference>
<dbReference type="EMBL" id="BC101770">
    <property type="protein sequence ID" value="AAI01771.1"/>
    <property type="molecule type" value="mRNA"/>
</dbReference>
<dbReference type="EMBL" id="BC101776">
    <property type="protein sequence ID" value="AAI01777.1"/>
    <property type="molecule type" value="mRNA"/>
</dbReference>
<dbReference type="CCDS" id="CCDS33698.1"/>
<dbReference type="RefSeq" id="NP_055575.3">
    <property type="nucleotide sequence ID" value="NM_014760.3"/>
</dbReference>
<dbReference type="SMR" id="Q93075"/>
<dbReference type="BioGRID" id="115140">
    <property type="interactions" value="18"/>
</dbReference>
<dbReference type="FunCoup" id="Q93075">
    <property type="interactions" value="1266"/>
</dbReference>
<dbReference type="IntAct" id="Q93075">
    <property type="interactions" value="11"/>
</dbReference>
<dbReference type="STRING" id="9606.ENSP00000287652"/>
<dbReference type="GlyCosmos" id="Q93075">
    <property type="glycosylation" value="1 site, 1 glycan"/>
</dbReference>
<dbReference type="GlyGen" id="Q93075">
    <property type="glycosylation" value="1 site, 1 O-linked glycan (1 site)"/>
</dbReference>
<dbReference type="iPTMnet" id="Q93075"/>
<dbReference type="PhosphoSitePlus" id="Q93075"/>
<dbReference type="BioMuta" id="TATDN2"/>
<dbReference type="DMDM" id="209572689"/>
<dbReference type="jPOST" id="Q93075"/>
<dbReference type="MassIVE" id="Q93075"/>
<dbReference type="PaxDb" id="9606-ENSP00000287652"/>
<dbReference type="PeptideAtlas" id="Q93075"/>
<dbReference type="ProteomicsDB" id="75704"/>
<dbReference type="Pumba" id="Q93075"/>
<dbReference type="Antibodypedia" id="49486">
    <property type="antibodies" value="11 antibodies from 6 providers"/>
</dbReference>
<dbReference type="DNASU" id="9797"/>
<dbReference type="Ensembl" id="ENST00000287652.8">
    <property type="protein sequence ID" value="ENSP00000287652.4"/>
    <property type="gene ID" value="ENSG00000157014.11"/>
</dbReference>
<dbReference type="Ensembl" id="ENST00000448281.7">
    <property type="protein sequence ID" value="ENSP00000408736.2"/>
    <property type="gene ID" value="ENSG00000157014.11"/>
</dbReference>
<dbReference type="GeneID" id="9797"/>
<dbReference type="KEGG" id="hsa:9797"/>
<dbReference type="MANE-Select" id="ENST00000448281.7">
    <property type="protein sequence ID" value="ENSP00000408736.2"/>
    <property type="RefSeq nucleotide sequence ID" value="NM_014760.4"/>
    <property type="RefSeq protein sequence ID" value="NP_055575.3"/>
</dbReference>
<dbReference type="UCSC" id="uc003bvf.4">
    <property type="organism name" value="human"/>
</dbReference>
<dbReference type="AGR" id="HGNC:28988"/>
<dbReference type="CTD" id="9797"/>
<dbReference type="DisGeNET" id="9797"/>
<dbReference type="GeneCards" id="TATDN2"/>
<dbReference type="HGNC" id="HGNC:28988">
    <property type="gene designation" value="TATDN2"/>
</dbReference>
<dbReference type="HPA" id="ENSG00000157014">
    <property type="expression patterns" value="Low tissue specificity"/>
</dbReference>
<dbReference type="MIM" id="619330">
    <property type="type" value="gene"/>
</dbReference>
<dbReference type="neXtProt" id="NX_Q93075"/>
<dbReference type="OpenTargets" id="ENSG00000157014"/>
<dbReference type="PharmGKB" id="PA134959721"/>
<dbReference type="VEuPathDB" id="HostDB:ENSG00000157014"/>
<dbReference type="eggNOG" id="KOG3020">
    <property type="taxonomic scope" value="Eukaryota"/>
</dbReference>
<dbReference type="GeneTree" id="ENSGT00940000155616"/>
<dbReference type="HOGENOM" id="CLU_019741_1_0_1"/>
<dbReference type="InParanoid" id="Q93075"/>
<dbReference type="OMA" id="MNSECAA"/>
<dbReference type="OrthoDB" id="413993at2759"/>
<dbReference type="PAN-GO" id="Q93075">
    <property type="GO annotations" value="0 GO annotations based on evolutionary models"/>
</dbReference>
<dbReference type="PhylomeDB" id="Q93075"/>
<dbReference type="TreeFam" id="TF324192"/>
<dbReference type="PathwayCommons" id="Q93075"/>
<dbReference type="Reactome" id="R-HSA-381038">
    <property type="pathway name" value="XBP1(S) activates chaperone genes"/>
</dbReference>
<dbReference type="SignaLink" id="Q93075"/>
<dbReference type="BioGRID-ORCS" id="9797">
    <property type="hits" value="10 hits in 1144 CRISPR screens"/>
</dbReference>
<dbReference type="ChiTaRS" id="TATDN2">
    <property type="organism name" value="human"/>
</dbReference>
<dbReference type="GenomeRNAi" id="9797"/>
<dbReference type="Pharos" id="Q93075">
    <property type="development level" value="Tdark"/>
</dbReference>
<dbReference type="PRO" id="PR:Q93075"/>
<dbReference type="Proteomes" id="UP000005640">
    <property type="component" value="Chromosome 3"/>
</dbReference>
<dbReference type="RNAct" id="Q93075">
    <property type="molecule type" value="protein"/>
</dbReference>
<dbReference type="Bgee" id="ENSG00000157014">
    <property type="expression patterns" value="Expressed in type B pancreatic cell and 197 other cell types or tissues"/>
</dbReference>
<dbReference type="ExpressionAtlas" id="Q93075">
    <property type="expression patterns" value="baseline and differential"/>
</dbReference>
<dbReference type="GO" id="GO:0005654">
    <property type="term" value="C:nucleoplasm"/>
    <property type="evidence" value="ECO:0000304"/>
    <property type="project" value="Reactome"/>
</dbReference>
<dbReference type="GO" id="GO:0046872">
    <property type="term" value="F:metal ion binding"/>
    <property type="evidence" value="ECO:0007669"/>
    <property type="project" value="UniProtKB-KW"/>
</dbReference>
<dbReference type="GO" id="GO:0004518">
    <property type="term" value="F:nuclease activity"/>
    <property type="evidence" value="ECO:0007669"/>
    <property type="project" value="UniProtKB-KW"/>
</dbReference>
<dbReference type="CDD" id="cd01310">
    <property type="entry name" value="TatD_DNAse"/>
    <property type="match status" value="1"/>
</dbReference>
<dbReference type="FunFam" id="3.20.20.140:FF:000027">
    <property type="entry name" value="putative deoxyribonuclease TATDN2"/>
    <property type="match status" value="1"/>
</dbReference>
<dbReference type="Gene3D" id="3.20.20.140">
    <property type="entry name" value="Metal-dependent hydrolases"/>
    <property type="match status" value="1"/>
</dbReference>
<dbReference type="InterPro" id="IPR018228">
    <property type="entry name" value="DNase_TatD-rel_CS"/>
</dbReference>
<dbReference type="InterPro" id="IPR032466">
    <property type="entry name" value="Metal_Hydrolase"/>
</dbReference>
<dbReference type="InterPro" id="IPR001130">
    <property type="entry name" value="TatD-like"/>
</dbReference>
<dbReference type="PANTHER" id="PTHR46363">
    <property type="entry name" value="DEOXYRIBONUCLEASE TATDN2-RELATED"/>
    <property type="match status" value="1"/>
</dbReference>
<dbReference type="PANTHER" id="PTHR46363:SF1">
    <property type="entry name" value="DEOXYRIBONUCLEASE TATDN2-RELATED"/>
    <property type="match status" value="1"/>
</dbReference>
<dbReference type="Pfam" id="PF01026">
    <property type="entry name" value="TatD_DNase"/>
    <property type="match status" value="1"/>
</dbReference>
<dbReference type="SUPFAM" id="SSF51556">
    <property type="entry name" value="Metallo-dependent hydrolases"/>
    <property type="match status" value="1"/>
</dbReference>
<dbReference type="PROSITE" id="PS01137">
    <property type="entry name" value="TATD_1"/>
    <property type="match status" value="1"/>
</dbReference>
<dbReference type="PROSITE" id="PS01090">
    <property type="entry name" value="TATD_2"/>
    <property type="match status" value="1"/>
</dbReference>
<dbReference type="PROSITE" id="PS01091">
    <property type="entry name" value="TATD_3"/>
    <property type="match status" value="1"/>
</dbReference>
<sequence length="761" mass="85023">MASERGKVKHNWSSTSEGCPRKRSCLREPCDVAPSSRPAQRSASRSGGPSSPKRLKAQKEDDVACSRRLSWGSSRRRNNSSSSFSPHFLGPGVGGAASKGCLIRNTRGFLSSGGSPLRPANASLEEMASLEEEACSLKVDSKDSSHNSTNSEFAAEAEGQNDTIEEPNKVQKRKRDRLRDQGSTMIYLKAIQGILGKSMPKRKGEAATRAKPSAAEHPSHGEGPARSEGPAKTAEGAARSVTVTAAQKEKDATPEVSMEEDKTVPERSSFYDRRVVIDPQEKPSEEPLGDRRTVIDKCSPPLEFLDDSDSHLEIQKHKDREVVMEHPSSGSDWSDVEEISTVRFSQEEPVSLKPSAVPEPSSFTTDYVMYPPHLYSSPWCDYASYWTSSPKPSSYPSTGSSSNDAAQVGKSSRSRMSDYSPNSTGSVQNTSRDMEASEEGWSQNSRSFRFSRSSEEREVKEKRTFQEEMPPRPCGGHASSSLPKSHLEPSLEEGFIDTHCHLDMLYSKLSFQGTFTKFRKIYSSSFPKEFQGCISDFCDPRTLTDCLWEELLKEDLVWGAFGCHPHFARYYSESQERNLLQALRHPKAVAFGEMGLDYSYKCTTPVPEQHKVFERQLQLAVSLKKPLVIHCREADEDLLEIMKKFVPPDYKIHRHCFTGSYPVIEPLLKYFPNMSVGFTAVLTYSSAWEAREALRQIPLERIIVETDAPYFLPRQVPKSLCQYAHPGLALHTVREIARVKDQPLSLTLAALRENTSRLYSL</sequence>
<protein>
    <recommendedName>
        <fullName>3'-5' RNA nuclease TATDN2</fullName>
        <ecNumber evidence="4">3.1.13.-</ecNumber>
    </recommendedName>
    <alternativeName>
        <fullName evidence="7">TatD DNase domain containing 2</fullName>
    </alternativeName>
</protein>
<proteinExistence type="evidence at protein level"/>
<reference key="1">
    <citation type="journal article" date="1996" name="DNA Res.">
        <title>Prediction of the coding sequences of unidentified human genes. VI. The coding sequences of 80 new genes (KIAA0201-KIAA0280) deduced by analysis of cDNA clones from cell line KG-1 and brain.</title>
        <authorList>
            <person name="Nagase T."/>
            <person name="Seki N."/>
            <person name="Ishikawa K."/>
            <person name="Ohira M."/>
            <person name="Kawarabayasi Y."/>
            <person name="Ohara O."/>
            <person name="Tanaka A."/>
            <person name="Kotani H."/>
            <person name="Miyajima N."/>
            <person name="Nomura N."/>
        </authorList>
    </citation>
    <scope>NUCLEOTIDE SEQUENCE [LARGE SCALE MRNA]</scope>
    <scope>VARIANT LEU-358</scope>
    <source>
        <tissue>Bone marrow</tissue>
    </source>
</reference>
<reference key="2">
    <citation type="submission" date="2005-07" db="EMBL/GenBank/DDBJ databases">
        <authorList>
            <person name="Mural R.J."/>
            <person name="Istrail S."/>
            <person name="Sutton G.G."/>
            <person name="Florea L."/>
            <person name="Halpern A.L."/>
            <person name="Mobarry C.M."/>
            <person name="Lippert R."/>
            <person name="Walenz B."/>
            <person name="Shatkay H."/>
            <person name="Dew I."/>
            <person name="Miller J.R."/>
            <person name="Flanigan M.J."/>
            <person name="Edwards N.J."/>
            <person name="Bolanos R."/>
            <person name="Fasulo D."/>
            <person name="Halldorsson B.V."/>
            <person name="Hannenhalli S."/>
            <person name="Turner R."/>
            <person name="Yooseph S."/>
            <person name="Lu F."/>
            <person name="Nusskern D.R."/>
            <person name="Shue B.C."/>
            <person name="Zheng X.H."/>
            <person name="Zhong F."/>
            <person name="Delcher A.L."/>
            <person name="Huson D.H."/>
            <person name="Kravitz S.A."/>
            <person name="Mouchard L."/>
            <person name="Reinert K."/>
            <person name="Remington K.A."/>
            <person name="Clark A.G."/>
            <person name="Waterman M.S."/>
            <person name="Eichler E.E."/>
            <person name="Adams M.D."/>
            <person name="Hunkapiller M.W."/>
            <person name="Myers E.W."/>
            <person name="Venter J.C."/>
        </authorList>
    </citation>
    <scope>NUCLEOTIDE SEQUENCE [LARGE SCALE GENOMIC DNA]</scope>
</reference>
<reference key="3">
    <citation type="journal article" date="2004" name="Genome Res.">
        <title>The status, quality, and expansion of the NIH full-length cDNA project: the Mammalian Gene Collection (MGC).</title>
        <authorList>
            <consortium name="The MGC Project Team"/>
        </authorList>
    </citation>
    <scope>NUCLEOTIDE SEQUENCE [LARGE SCALE MRNA]</scope>
    <scope>VARIANT ILE-256</scope>
    <source>
        <tissue>Brain</tissue>
        <tissue>Lymph</tissue>
    </source>
</reference>
<reference key="4">
    <citation type="journal article" date="2014" name="Mol. Cell. Proteomics">
        <title>Immunoaffinity enrichment and mass spectrometry analysis of protein methylation.</title>
        <authorList>
            <person name="Guo A."/>
            <person name="Gu H."/>
            <person name="Zhou J."/>
            <person name="Mulhern D."/>
            <person name="Wang Y."/>
            <person name="Lee K.A."/>
            <person name="Yang V."/>
            <person name="Aguiar M."/>
            <person name="Kornhauser J."/>
            <person name="Jia X."/>
            <person name="Ren J."/>
            <person name="Beausoleil S.A."/>
            <person name="Silva J.C."/>
            <person name="Vemulapalli V."/>
            <person name="Bedford M.T."/>
            <person name="Comb M.J."/>
        </authorList>
    </citation>
    <scope>IDENTIFICATION BY MASS SPECTROMETRY [LARGE SCALE ANALYSIS]</scope>
    <source>
        <tissue>Colon carcinoma</tissue>
    </source>
</reference>
<reference key="5">
    <citation type="journal article" date="2023" name="Nucleic Acids Res.">
        <title>TATDN2 resolution of R-loops is required for survival of BRCA1-mutant cancer cells.</title>
        <authorList>
            <person name="Jaiswal A.S."/>
            <person name="Dutta A."/>
            <person name="Srinivasan G."/>
            <person name="Yuan Y."/>
            <person name="Zhou D."/>
            <person name="Shaheen M."/>
            <person name="Sadideen D.T."/>
            <person name="Kirby A."/>
            <person name="Williamson E.A."/>
            <person name="Gupta Y.K."/>
            <person name="Olsen S.K."/>
            <person name="Xu M."/>
            <person name="Loranc E."/>
            <person name="Mukhopadhyay P."/>
            <person name="Pertsemlidis A."/>
            <person name="Bishop A.J.R."/>
            <person name="Sung P."/>
            <person name="Nickoloff J.A."/>
            <person name="Hromas R."/>
        </authorList>
    </citation>
    <scope>FUNCTION</scope>
    <scope>CATALYTIC ACTIVITY</scope>
    <scope>COFACTOR</scope>
    <scope>MUTAGENESIS OF GLU-593; GLU-705 AND ASP-707</scope>
</reference>